<proteinExistence type="inferred from homology"/>
<dbReference type="EMBL" id="CP000444">
    <property type="protein sequence ID" value="ABI42910.1"/>
    <property type="molecule type" value="Genomic_DNA"/>
</dbReference>
<dbReference type="SMR" id="Q0HVE5"/>
<dbReference type="KEGG" id="shm:Shewmr7_1921"/>
<dbReference type="HOGENOM" id="CLU_099590_0_0_6"/>
<dbReference type="Gene3D" id="3.10.450.50">
    <property type="match status" value="1"/>
</dbReference>
<dbReference type="HAMAP" id="MF_00612">
    <property type="entry name" value="UPF0225"/>
    <property type="match status" value="1"/>
</dbReference>
<dbReference type="InterPro" id="IPR032710">
    <property type="entry name" value="NTF2-like_dom_sf"/>
</dbReference>
<dbReference type="InterPro" id="IPR004027">
    <property type="entry name" value="SEC_C_motif"/>
</dbReference>
<dbReference type="InterPro" id="IPR023006">
    <property type="entry name" value="UPF0225"/>
</dbReference>
<dbReference type="InterPro" id="IPR048469">
    <property type="entry name" value="YchJ-like_M"/>
</dbReference>
<dbReference type="NCBIfam" id="NF002486">
    <property type="entry name" value="PRK01752.1"/>
    <property type="match status" value="1"/>
</dbReference>
<dbReference type="PANTHER" id="PTHR33747:SF1">
    <property type="entry name" value="ADENYLATE CYCLASE-ASSOCIATED CAP C-TERMINAL DOMAIN-CONTAINING PROTEIN"/>
    <property type="match status" value="1"/>
</dbReference>
<dbReference type="PANTHER" id="PTHR33747">
    <property type="entry name" value="UPF0225 PROTEIN SCO1677"/>
    <property type="match status" value="1"/>
</dbReference>
<dbReference type="Pfam" id="PF02810">
    <property type="entry name" value="SEC-C"/>
    <property type="match status" value="1"/>
</dbReference>
<dbReference type="Pfam" id="PF17775">
    <property type="entry name" value="YchJ_M-like"/>
    <property type="match status" value="1"/>
</dbReference>
<dbReference type="SUPFAM" id="SSF54427">
    <property type="entry name" value="NTF2-like"/>
    <property type="match status" value="1"/>
</dbReference>
<dbReference type="SUPFAM" id="SSF103642">
    <property type="entry name" value="Sec-C motif"/>
    <property type="match status" value="1"/>
</dbReference>
<organism>
    <name type="scientific">Shewanella sp. (strain MR-7)</name>
    <dbReference type="NCBI Taxonomy" id="60481"/>
    <lineage>
        <taxon>Bacteria</taxon>
        <taxon>Pseudomonadati</taxon>
        <taxon>Pseudomonadota</taxon>
        <taxon>Gammaproteobacteria</taxon>
        <taxon>Alteromonadales</taxon>
        <taxon>Shewanellaceae</taxon>
        <taxon>Shewanella</taxon>
    </lineage>
</organism>
<gene>
    <name type="ordered locus">Shewmr7_1921</name>
</gene>
<reference key="1">
    <citation type="submission" date="2006-08" db="EMBL/GenBank/DDBJ databases">
        <title>Complete sequence of chromosome 1 of Shewanella sp. MR-7.</title>
        <authorList>
            <person name="Copeland A."/>
            <person name="Lucas S."/>
            <person name="Lapidus A."/>
            <person name="Barry K."/>
            <person name="Detter J.C."/>
            <person name="Glavina del Rio T."/>
            <person name="Hammon N."/>
            <person name="Israni S."/>
            <person name="Dalin E."/>
            <person name="Tice H."/>
            <person name="Pitluck S."/>
            <person name="Kiss H."/>
            <person name="Brettin T."/>
            <person name="Bruce D."/>
            <person name="Han C."/>
            <person name="Tapia R."/>
            <person name="Gilna P."/>
            <person name="Schmutz J."/>
            <person name="Larimer F."/>
            <person name="Land M."/>
            <person name="Hauser L."/>
            <person name="Kyrpides N."/>
            <person name="Mikhailova N."/>
            <person name="Nealson K."/>
            <person name="Konstantinidis K."/>
            <person name="Klappenbach J."/>
            <person name="Tiedje J."/>
            <person name="Richardson P."/>
        </authorList>
    </citation>
    <scope>NUCLEOTIDE SEQUENCE [LARGE SCALE GENOMIC DNA]</scope>
    <source>
        <strain>MR-7</strain>
    </source>
</reference>
<accession>Q0HVE5</accession>
<evidence type="ECO:0000255" key="1">
    <source>
        <dbReference type="HAMAP-Rule" id="MF_00612"/>
    </source>
</evidence>
<comment type="similarity">
    <text evidence="1">Belongs to the UPF0225 family.</text>
</comment>
<feature type="chain" id="PRO_1000056740" description="UPF0225 protein Shewmr7_1921">
    <location>
        <begin position="1"/>
        <end position="164"/>
    </location>
</feature>
<sequence>MIHDKTCPCGSQKIYQDCCQILHLGLDSGAQLATCPEQLMRSRYCAFVLKNFDYIIKTHHADFLEGLTLEQLQQGPHPEWLGLDVLSADDTTQSDGSKGGTVTFKAWYKMNGEIDAIYERSEFIFEQSRWFYTQGHQMHAKLPGRNDPCVCHSGKKFKQCCMKG</sequence>
<protein>
    <recommendedName>
        <fullName evidence="1">UPF0225 protein Shewmr7_1921</fullName>
    </recommendedName>
</protein>
<name>Y1921_SHESR</name>